<accession>A8LJ24</accession>
<name>GATC_DINSH</name>
<keyword id="KW-0067">ATP-binding</keyword>
<keyword id="KW-0436">Ligase</keyword>
<keyword id="KW-0547">Nucleotide-binding</keyword>
<keyword id="KW-0648">Protein biosynthesis</keyword>
<keyword id="KW-1185">Reference proteome</keyword>
<comment type="function">
    <text evidence="1">Allows the formation of correctly charged Asn-tRNA(Asn) or Gln-tRNA(Gln) through the transamidation of misacylated Asp-tRNA(Asn) or Glu-tRNA(Gln) in organisms which lack either or both of asparaginyl-tRNA or glutaminyl-tRNA synthetases. The reaction takes place in the presence of glutamine and ATP through an activated phospho-Asp-tRNA(Asn) or phospho-Glu-tRNA(Gln).</text>
</comment>
<comment type="catalytic activity">
    <reaction evidence="1">
        <text>L-glutamyl-tRNA(Gln) + L-glutamine + ATP + H2O = L-glutaminyl-tRNA(Gln) + L-glutamate + ADP + phosphate + H(+)</text>
        <dbReference type="Rhea" id="RHEA:17521"/>
        <dbReference type="Rhea" id="RHEA-COMP:9681"/>
        <dbReference type="Rhea" id="RHEA-COMP:9684"/>
        <dbReference type="ChEBI" id="CHEBI:15377"/>
        <dbReference type="ChEBI" id="CHEBI:15378"/>
        <dbReference type="ChEBI" id="CHEBI:29985"/>
        <dbReference type="ChEBI" id="CHEBI:30616"/>
        <dbReference type="ChEBI" id="CHEBI:43474"/>
        <dbReference type="ChEBI" id="CHEBI:58359"/>
        <dbReference type="ChEBI" id="CHEBI:78520"/>
        <dbReference type="ChEBI" id="CHEBI:78521"/>
        <dbReference type="ChEBI" id="CHEBI:456216"/>
    </reaction>
</comment>
<comment type="catalytic activity">
    <reaction evidence="1">
        <text>L-aspartyl-tRNA(Asn) + L-glutamine + ATP + H2O = L-asparaginyl-tRNA(Asn) + L-glutamate + ADP + phosphate + 2 H(+)</text>
        <dbReference type="Rhea" id="RHEA:14513"/>
        <dbReference type="Rhea" id="RHEA-COMP:9674"/>
        <dbReference type="Rhea" id="RHEA-COMP:9677"/>
        <dbReference type="ChEBI" id="CHEBI:15377"/>
        <dbReference type="ChEBI" id="CHEBI:15378"/>
        <dbReference type="ChEBI" id="CHEBI:29985"/>
        <dbReference type="ChEBI" id="CHEBI:30616"/>
        <dbReference type="ChEBI" id="CHEBI:43474"/>
        <dbReference type="ChEBI" id="CHEBI:58359"/>
        <dbReference type="ChEBI" id="CHEBI:78515"/>
        <dbReference type="ChEBI" id="CHEBI:78516"/>
        <dbReference type="ChEBI" id="CHEBI:456216"/>
    </reaction>
</comment>
<comment type="subunit">
    <text evidence="1">Heterotrimer of A, B and C subunits.</text>
</comment>
<comment type="similarity">
    <text evidence="1">Belongs to the GatC family.</text>
</comment>
<sequence>MSIDIETARRVAKLARIKVEDDALPALAGEFNHILGFIEQLNEVDVDDVEPMTSVTPMRLKRREDVVTDGDQQAAVLSNAPDAREGFFAVPKVVE</sequence>
<evidence type="ECO:0000255" key="1">
    <source>
        <dbReference type="HAMAP-Rule" id="MF_00122"/>
    </source>
</evidence>
<feature type="chain" id="PRO_1000076182" description="Aspartyl/glutamyl-tRNA(Asn/Gln) amidotransferase subunit C">
    <location>
        <begin position="1"/>
        <end position="95"/>
    </location>
</feature>
<protein>
    <recommendedName>
        <fullName evidence="1">Aspartyl/glutamyl-tRNA(Asn/Gln) amidotransferase subunit C</fullName>
        <shortName evidence="1">Asp/Glu-ADT subunit C</shortName>
        <ecNumber evidence="1">6.3.5.-</ecNumber>
    </recommendedName>
</protein>
<reference key="1">
    <citation type="journal article" date="2010" name="ISME J.">
        <title>The complete genome sequence of the algal symbiont Dinoroseobacter shibae: a hitchhiker's guide to life in the sea.</title>
        <authorList>
            <person name="Wagner-Dobler I."/>
            <person name="Ballhausen B."/>
            <person name="Berger M."/>
            <person name="Brinkhoff T."/>
            <person name="Buchholz I."/>
            <person name="Bunk B."/>
            <person name="Cypionka H."/>
            <person name="Daniel R."/>
            <person name="Drepper T."/>
            <person name="Gerdts G."/>
            <person name="Hahnke S."/>
            <person name="Han C."/>
            <person name="Jahn D."/>
            <person name="Kalhoefer D."/>
            <person name="Kiss H."/>
            <person name="Klenk H.P."/>
            <person name="Kyrpides N."/>
            <person name="Liebl W."/>
            <person name="Liesegang H."/>
            <person name="Meincke L."/>
            <person name="Pati A."/>
            <person name="Petersen J."/>
            <person name="Piekarski T."/>
            <person name="Pommerenke C."/>
            <person name="Pradella S."/>
            <person name="Pukall R."/>
            <person name="Rabus R."/>
            <person name="Stackebrandt E."/>
            <person name="Thole S."/>
            <person name="Thompson L."/>
            <person name="Tielen P."/>
            <person name="Tomasch J."/>
            <person name="von Jan M."/>
            <person name="Wanphrut N."/>
            <person name="Wichels A."/>
            <person name="Zech H."/>
            <person name="Simon M."/>
        </authorList>
    </citation>
    <scope>NUCLEOTIDE SEQUENCE [LARGE SCALE GENOMIC DNA]</scope>
    <source>
        <strain>DSM 16493 / NCIMB 14021 / DFL 12</strain>
    </source>
</reference>
<proteinExistence type="inferred from homology"/>
<dbReference type="EC" id="6.3.5.-" evidence="1"/>
<dbReference type="EMBL" id="CP000830">
    <property type="protein sequence ID" value="ABV94519.1"/>
    <property type="molecule type" value="Genomic_DNA"/>
</dbReference>
<dbReference type="RefSeq" id="WP_012179447.1">
    <property type="nucleotide sequence ID" value="NC_009952.1"/>
</dbReference>
<dbReference type="SMR" id="A8LJ24"/>
<dbReference type="STRING" id="398580.Dshi_2786"/>
<dbReference type="KEGG" id="dsh:Dshi_2786"/>
<dbReference type="eggNOG" id="COG0721">
    <property type="taxonomic scope" value="Bacteria"/>
</dbReference>
<dbReference type="HOGENOM" id="CLU_105899_2_0_5"/>
<dbReference type="OrthoDB" id="9794326at2"/>
<dbReference type="Proteomes" id="UP000006833">
    <property type="component" value="Chromosome"/>
</dbReference>
<dbReference type="GO" id="GO:0050566">
    <property type="term" value="F:asparaginyl-tRNA synthase (glutamine-hydrolyzing) activity"/>
    <property type="evidence" value="ECO:0007669"/>
    <property type="project" value="RHEA"/>
</dbReference>
<dbReference type="GO" id="GO:0005524">
    <property type="term" value="F:ATP binding"/>
    <property type="evidence" value="ECO:0007669"/>
    <property type="project" value="UniProtKB-KW"/>
</dbReference>
<dbReference type="GO" id="GO:0050567">
    <property type="term" value="F:glutaminyl-tRNA synthase (glutamine-hydrolyzing) activity"/>
    <property type="evidence" value="ECO:0007669"/>
    <property type="project" value="UniProtKB-UniRule"/>
</dbReference>
<dbReference type="GO" id="GO:0070681">
    <property type="term" value="P:glutaminyl-tRNAGln biosynthesis via transamidation"/>
    <property type="evidence" value="ECO:0007669"/>
    <property type="project" value="TreeGrafter"/>
</dbReference>
<dbReference type="GO" id="GO:0006450">
    <property type="term" value="P:regulation of translational fidelity"/>
    <property type="evidence" value="ECO:0007669"/>
    <property type="project" value="InterPro"/>
</dbReference>
<dbReference type="GO" id="GO:0006412">
    <property type="term" value="P:translation"/>
    <property type="evidence" value="ECO:0007669"/>
    <property type="project" value="UniProtKB-UniRule"/>
</dbReference>
<dbReference type="Gene3D" id="1.10.20.60">
    <property type="entry name" value="Glu-tRNAGln amidotransferase C subunit, N-terminal domain"/>
    <property type="match status" value="1"/>
</dbReference>
<dbReference type="HAMAP" id="MF_00122">
    <property type="entry name" value="GatC"/>
    <property type="match status" value="1"/>
</dbReference>
<dbReference type="InterPro" id="IPR036113">
    <property type="entry name" value="Asp/Glu-ADT_sf_sub_c"/>
</dbReference>
<dbReference type="InterPro" id="IPR003837">
    <property type="entry name" value="GatC"/>
</dbReference>
<dbReference type="NCBIfam" id="TIGR00135">
    <property type="entry name" value="gatC"/>
    <property type="match status" value="1"/>
</dbReference>
<dbReference type="PANTHER" id="PTHR15004">
    <property type="entry name" value="GLUTAMYL-TRNA(GLN) AMIDOTRANSFERASE SUBUNIT C, MITOCHONDRIAL"/>
    <property type="match status" value="1"/>
</dbReference>
<dbReference type="PANTHER" id="PTHR15004:SF0">
    <property type="entry name" value="GLUTAMYL-TRNA(GLN) AMIDOTRANSFERASE SUBUNIT C, MITOCHONDRIAL"/>
    <property type="match status" value="1"/>
</dbReference>
<dbReference type="Pfam" id="PF02686">
    <property type="entry name" value="GatC"/>
    <property type="match status" value="1"/>
</dbReference>
<dbReference type="SUPFAM" id="SSF141000">
    <property type="entry name" value="Glu-tRNAGln amidotransferase C subunit"/>
    <property type="match status" value="1"/>
</dbReference>
<organism>
    <name type="scientific">Dinoroseobacter shibae (strain DSM 16493 / NCIMB 14021 / DFL 12)</name>
    <dbReference type="NCBI Taxonomy" id="398580"/>
    <lineage>
        <taxon>Bacteria</taxon>
        <taxon>Pseudomonadati</taxon>
        <taxon>Pseudomonadota</taxon>
        <taxon>Alphaproteobacteria</taxon>
        <taxon>Rhodobacterales</taxon>
        <taxon>Roseobacteraceae</taxon>
        <taxon>Dinoroseobacter</taxon>
    </lineage>
</organism>
<gene>
    <name evidence="1" type="primary">gatC</name>
    <name type="ordered locus">Dshi_2786</name>
</gene>